<name>SYGA_ECOLC</name>
<feature type="chain" id="PRO_1000078526" description="Glycine--tRNA ligase alpha subunit">
    <location>
        <begin position="1"/>
        <end position="303"/>
    </location>
</feature>
<proteinExistence type="inferred from homology"/>
<comment type="catalytic activity">
    <reaction evidence="1">
        <text>tRNA(Gly) + glycine + ATP = glycyl-tRNA(Gly) + AMP + diphosphate</text>
        <dbReference type="Rhea" id="RHEA:16013"/>
        <dbReference type="Rhea" id="RHEA-COMP:9664"/>
        <dbReference type="Rhea" id="RHEA-COMP:9683"/>
        <dbReference type="ChEBI" id="CHEBI:30616"/>
        <dbReference type="ChEBI" id="CHEBI:33019"/>
        <dbReference type="ChEBI" id="CHEBI:57305"/>
        <dbReference type="ChEBI" id="CHEBI:78442"/>
        <dbReference type="ChEBI" id="CHEBI:78522"/>
        <dbReference type="ChEBI" id="CHEBI:456215"/>
        <dbReference type="EC" id="6.1.1.14"/>
    </reaction>
</comment>
<comment type="subunit">
    <text evidence="1">Tetramer of two alpha and two beta subunits.</text>
</comment>
<comment type="subcellular location">
    <subcellularLocation>
        <location evidence="1">Cytoplasm</location>
    </subcellularLocation>
</comment>
<comment type="similarity">
    <text evidence="1">Belongs to the class-II aminoacyl-tRNA synthetase family.</text>
</comment>
<dbReference type="EC" id="6.1.1.14" evidence="1"/>
<dbReference type="EMBL" id="CP000946">
    <property type="protein sequence ID" value="ACA75837.1"/>
    <property type="molecule type" value="Genomic_DNA"/>
</dbReference>
<dbReference type="RefSeq" id="WP_001168544.1">
    <property type="nucleotide sequence ID" value="NZ_MTFT01000030.1"/>
</dbReference>
<dbReference type="SMR" id="B1IZN3"/>
<dbReference type="GeneID" id="93778290"/>
<dbReference type="KEGG" id="ecl:EcolC_0155"/>
<dbReference type="HOGENOM" id="CLU_057066_1_0_6"/>
<dbReference type="GO" id="GO:0005829">
    <property type="term" value="C:cytosol"/>
    <property type="evidence" value="ECO:0007669"/>
    <property type="project" value="TreeGrafter"/>
</dbReference>
<dbReference type="GO" id="GO:0005524">
    <property type="term" value="F:ATP binding"/>
    <property type="evidence" value="ECO:0007669"/>
    <property type="project" value="UniProtKB-UniRule"/>
</dbReference>
<dbReference type="GO" id="GO:0004820">
    <property type="term" value="F:glycine-tRNA ligase activity"/>
    <property type="evidence" value="ECO:0007669"/>
    <property type="project" value="UniProtKB-UniRule"/>
</dbReference>
<dbReference type="GO" id="GO:0006426">
    <property type="term" value="P:glycyl-tRNA aminoacylation"/>
    <property type="evidence" value="ECO:0007669"/>
    <property type="project" value="UniProtKB-UniRule"/>
</dbReference>
<dbReference type="CDD" id="cd00733">
    <property type="entry name" value="GlyRS_alpha_core"/>
    <property type="match status" value="1"/>
</dbReference>
<dbReference type="FunFam" id="1.20.58.180:FF:000001">
    <property type="entry name" value="Glycine--tRNA ligase alpha subunit"/>
    <property type="match status" value="1"/>
</dbReference>
<dbReference type="FunFam" id="3.30.930.10:FF:000006">
    <property type="entry name" value="Glycine--tRNA ligase alpha subunit"/>
    <property type="match status" value="1"/>
</dbReference>
<dbReference type="Gene3D" id="3.30.930.10">
    <property type="entry name" value="Bira Bifunctional Protein, Domain 2"/>
    <property type="match status" value="1"/>
</dbReference>
<dbReference type="Gene3D" id="1.20.58.180">
    <property type="entry name" value="Class II aaRS and biotin synthetases, domain 2"/>
    <property type="match status" value="1"/>
</dbReference>
<dbReference type="HAMAP" id="MF_00254">
    <property type="entry name" value="Gly_tRNA_synth_alpha"/>
    <property type="match status" value="1"/>
</dbReference>
<dbReference type="InterPro" id="IPR045864">
    <property type="entry name" value="aa-tRNA-synth_II/BPL/LPL"/>
</dbReference>
<dbReference type="InterPro" id="IPR006194">
    <property type="entry name" value="Gly-tRNA-synth_heterodimer"/>
</dbReference>
<dbReference type="InterPro" id="IPR002310">
    <property type="entry name" value="Gly-tRNA_ligase_asu"/>
</dbReference>
<dbReference type="NCBIfam" id="TIGR00388">
    <property type="entry name" value="glyQ"/>
    <property type="match status" value="1"/>
</dbReference>
<dbReference type="NCBIfam" id="NF006827">
    <property type="entry name" value="PRK09348.1"/>
    <property type="match status" value="1"/>
</dbReference>
<dbReference type="PANTHER" id="PTHR30075:SF2">
    <property type="entry name" value="GLYCINE--TRNA LIGASE, CHLOROPLASTIC_MITOCHONDRIAL 2"/>
    <property type="match status" value="1"/>
</dbReference>
<dbReference type="PANTHER" id="PTHR30075">
    <property type="entry name" value="GLYCYL-TRNA SYNTHETASE"/>
    <property type="match status" value="1"/>
</dbReference>
<dbReference type="Pfam" id="PF02091">
    <property type="entry name" value="tRNA-synt_2e"/>
    <property type="match status" value="1"/>
</dbReference>
<dbReference type="PRINTS" id="PR01044">
    <property type="entry name" value="TRNASYNTHGA"/>
</dbReference>
<dbReference type="SUPFAM" id="SSF55681">
    <property type="entry name" value="Class II aaRS and biotin synthetases"/>
    <property type="match status" value="1"/>
</dbReference>
<dbReference type="PROSITE" id="PS50861">
    <property type="entry name" value="AA_TRNA_LIGASE_II_GLYAB"/>
    <property type="match status" value="1"/>
</dbReference>
<evidence type="ECO:0000255" key="1">
    <source>
        <dbReference type="HAMAP-Rule" id="MF_00254"/>
    </source>
</evidence>
<organism>
    <name type="scientific">Escherichia coli (strain ATCC 8739 / DSM 1576 / NBRC 3972 / NCIMB 8545 / WDCM 00012 / Crooks)</name>
    <dbReference type="NCBI Taxonomy" id="481805"/>
    <lineage>
        <taxon>Bacteria</taxon>
        <taxon>Pseudomonadati</taxon>
        <taxon>Pseudomonadota</taxon>
        <taxon>Gammaproteobacteria</taxon>
        <taxon>Enterobacterales</taxon>
        <taxon>Enterobacteriaceae</taxon>
        <taxon>Escherichia</taxon>
    </lineage>
</organism>
<sequence length="303" mass="34716">MQKFDTRTFQGLILTLQDYWARQGCTIVQPLDMEVGAGTSHPMTCLRALGPEPMAAAYVQPSRRPTDGRYGENPNRLQHYYQFQVVIKPSPDNIQELYLGSLKELGMDPTIHDIRFVEDNWENPTLGAWGLGWEVWLNGMEVTQFTYFQQVGGLECKPVTGEITYGLERLAMYIQGVDSVYDLVWSDGPLGKTTYGDVFHQNEVEQSTYNFEYADVDFLFTCFEQYEKEAQQLLALENPLPLPAYERILKAAHSFNLLDARKAISVTERQRYILRIRTLTKAVAEAYYASREALGFPMCNKDK</sequence>
<accession>B1IZN3</accession>
<keyword id="KW-0030">Aminoacyl-tRNA synthetase</keyword>
<keyword id="KW-0067">ATP-binding</keyword>
<keyword id="KW-0963">Cytoplasm</keyword>
<keyword id="KW-0436">Ligase</keyword>
<keyword id="KW-0547">Nucleotide-binding</keyword>
<keyword id="KW-0648">Protein biosynthesis</keyword>
<protein>
    <recommendedName>
        <fullName evidence="1">Glycine--tRNA ligase alpha subunit</fullName>
        <ecNumber evidence="1">6.1.1.14</ecNumber>
    </recommendedName>
    <alternativeName>
        <fullName evidence="1">Glycyl-tRNA synthetase alpha subunit</fullName>
        <shortName evidence="1">GlyRS</shortName>
    </alternativeName>
</protein>
<gene>
    <name evidence="1" type="primary">glyQ</name>
    <name type="ordered locus">EcolC_0155</name>
</gene>
<reference key="1">
    <citation type="submission" date="2008-02" db="EMBL/GenBank/DDBJ databases">
        <title>Complete sequence of Escherichia coli C str. ATCC 8739.</title>
        <authorList>
            <person name="Copeland A."/>
            <person name="Lucas S."/>
            <person name="Lapidus A."/>
            <person name="Glavina del Rio T."/>
            <person name="Dalin E."/>
            <person name="Tice H."/>
            <person name="Bruce D."/>
            <person name="Goodwin L."/>
            <person name="Pitluck S."/>
            <person name="Kiss H."/>
            <person name="Brettin T."/>
            <person name="Detter J.C."/>
            <person name="Han C."/>
            <person name="Kuske C.R."/>
            <person name="Schmutz J."/>
            <person name="Larimer F."/>
            <person name="Land M."/>
            <person name="Hauser L."/>
            <person name="Kyrpides N."/>
            <person name="Mikhailova N."/>
            <person name="Ingram L."/>
            <person name="Richardson P."/>
        </authorList>
    </citation>
    <scope>NUCLEOTIDE SEQUENCE [LARGE SCALE GENOMIC DNA]</scope>
    <source>
        <strain>ATCC 8739 / DSM 1576 / NBRC 3972 / NCIMB 8545 / WDCM 00012 / Crooks</strain>
    </source>
</reference>